<name>YP51_SCHPO</name>
<reference key="1">
    <citation type="journal article" date="2008" name="Yeast">
        <title>The gap-filling sequence on the left arm of chromosome 2 in fission yeast Schizosaccharomyces pombe.</title>
        <authorList>
            <person name="Sasaki M."/>
            <person name="Idiris A."/>
            <person name="Tada A."/>
            <person name="Kumagai H."/>
            <person name="Giga-Hama Y."/>
            <person name="Tohda H."/>
        </authorList>
    </citation>
    <scope>NUCLEOTIDE SEQUENCE [LARGE SCALE GENOMIC DNA]</scope>
    <source>
        <strain>972 / ATCC 24843</strain>
    </source>
</reference>
<comment type="subcellular location">
    <subcellularLocation>
        <location evidence="2">Membrane</location>
        <topology evidence="2">Multi-pass membrane protein</topology>
    </subcellularLocation>
</comment>
<comment type="similarity">
    <text evidence="2">Belongs to the amino acid-polyamine-organocation (APC) superfamily.</text>
</comment>
<feature type="chain" id="PRO_0000415919" description="Uncharacterized amino-acid permease C460.01c">
    <location>
        <begin position="1"/>
        <end position="572"/>
    </location>
</feature>
<feature type="transmembrane region" description="Helical" evidence="1">
    <location>
        <begin position="77"/>
        <end position="97"/>
    </location>
</feature>
<feature type="transmembrane region" description="Helical" evidence="1">
    <location>
        <begin position="102"/>
        <end position="122"/>
    </location>
</feature>
<feature type="transmembrane region" description="Helical" evidence="1">
    <location>
        <begin position="145"/>
        <end position="165"/>
    </location>
</feature>
<feature type="transmembrane region" description="Helical" evidence="1">
    <location>
        <begin position="180"/>
        <end position="200"/>
    </location>
</feature>
<feature type="transmembrane region" description="Helical" evidence="1">
    <location>
        <begin position="209"/>
        <end position="229"/>
    </location>
</feature>
<feature type="transmembrane region" description="Helical" evidence="1">
    <location>
        <begin position="259"/>
        <end position="279"/>
    </location>
</feature>
<feature type="transmembrane region" description="Helical" evidence="1">
    <location>
        <begin position="297"/>
        <end position="317"/>
    </location>
</feature>
<feature type="transmembrane region" description="Helical" evidence="1">
    <location>
        <begin position="341"/>
        <end position="361"/>
    </location>
</feature>
<feature type="transmembrane region" description="Helical" evidence="1">
    <location>
        <begin position="392"/>
        <end position="412"/>
    </location>
</feature>
<feature type="transmembrane region" description="Helical" evidence="1">
    <location>
        <begin position="431"/>
        <end position="451"/>
    </location>
</feature>
<feature type="transmembrane region" description="Helical" evidence="1">
    <location>
        <begin position="478"/>
        <end position="498"/>
    </location>
</feature>
<feature type="transmembrane region" description="Helical" evidence="1">
    <location>
        <begin position="507"/>
        <end position="527"/>
    </location>
</feature>
<accession>B5BP45</accession>
<gene>
    <name type="ORF">SPBC460.01c</name>
</gene>
<evidence type="ECO:0000255" key="1"/>
<evidence type="ECO:0000305" key="2"/>
<organism>
    <name type="scientific">Schizosaccharomyces pombe (strain 972 / ATCC 24843)</name>
    <name type="common">Fission yeast</name>
    <dbReference type="NCBI Taxonomy" id="284812"/>
    <lineage>
        <taxon>Eukaryota</taxon>
        <taxon>Fungi</taxon>
        <taxon>Dikarya</taxon>
        <taxon>Ascomycota</taxon>
        <taxon>Taphrinomycotina</taxon>
        <taxon>Schizosaccharomycetes</taxon>
        <taxon>Schizosaccharomycetales</taxon>
        <taxon>Schizosaccharomycetaceae</taxon>
        <taxon>Schizosaccharomyces</taxon>
    </lineage>
</organism>
<proteinExistence type="inferred from homology"/>
<keyword id="KW-0029">Amino-acid transport</keyword>
<keyword id="KW-0472">Membrane</keyword>
<keyword id="KW-0597">Phosphoprotein</keyword>
<keyword id="KW-0812">Transmembrane</keyword>
<keyword id="KW-1133">Transmembrane helix</keyword>
<keyword id="KW-0813">Transport</keyword>
<sequence length="572" mass="62785">MSHNNFELSPDYKDIDKKDDLNPSIVEKGYVEGVVDDVQPERKSFITKFFDDFKPAISTDEDGSALKRSLKARHMQMIAIGGAIGSGLYVGSGSSLSDGGPASIIINYTLIGIMMFFVVYALGELSVAYPVAGGFNTIATRFIDPAWGFTISWNYFINYFITFPLELTTCAITFRFWTDINSAAWISIFLVIVIIINLFGVRAYGEVEFILSTLKVIATLGFIILAIIINCGGVPTDHRGYIGGSIIKKDPFRHGFKGFCSVFTTAAFSFSGTEFIGLAAAEVDNPQKSLPHAVKQVFWRIAVFYIVSLTLIGLLISPDDPNLMGNGSTSVSPFVLAIQEANIKGLPSVFNAVIIISVVSVTNSSTYAAARTLHGMAGLGHAPKFFKYTDRLGRPLIAMVVVLLFGFFAYINEADKNGNDVSDTVFDWLLALAGLSNFFSWGSICLSHIIFRLAYKRQGRSLRDLGFVSPMGIWGSCIGLFFNILCLMAQFYVSLFPIGGKPNANDFFQGYLAACVAIVFFVGYKIYDRSHVPSLDKLDISTGLRTYENSDEEDETSSGFKHVLKKIYGAFC</sequence>
<protein>
    <recommendedName>
        <fullName>Uncharacterized amino-acid permease C460.01c</fullName>
    </recommendedName>
</protein>
<dbReference type="EMBL" id="AB325691">
    <property type="protein sequence ID" value="BAG68901.1"/>
    <property type="molecule type" value="Genomic_DNA"/>
</dbReference>
<dbReference type="SMR" id="B5BP45"/>
<dbReference type="FunCoup" id="B5BP45">
    <property type="interactions" value="304"/>
</dbReference>
<dbReference type="STRING" id="284812.B5BP45"/>
<dbReference type="iPTMnet" id="B5BP45"/>
<dbReference type="PaxDb" id="4896-SPBC460.01c.1"/>
<dbReference type="EnsemblFungi" id="SPBC460.01c.1">
    <property type="protein sequence ID" value="SPBC460.01c.1:pep"/>
    <property type="gene ID" value="SPBC460.01c"/>
</dbReference>
<dbReference type="PomBase" id="SPBC460.01c"/>
<dbReference type="VEuPathDB" id="FungiDB:SPBC460.01c"/>
<dbReference type="eggNOG" id="KOG1286">
    <property type="taxonomic scope" value="Eukaryota"/>
</dbReference>
<dbReference type="HOGENOM" id="CLU_007946_12_0_1"/>
<dbReference type="InParanoid" id="B5BP45"/>
<dbReference type="OMA" id="NWTIVTI"/>
<dbReference type="PRO" id="PR:B5BP45"/>
<dbReference type="GO" id="GO:0016020">
    <property type="term" value="C:membrane"/>
    <property type="evidence" value="ECO:0000318"/>
    <property type="project" value="GO_Central"/>
</dbReference>
<dbReference type="GO" id="GO:0015171">
    <property type="term" value="F:amino acid transmembrane transporter activity"/>
    <property type="evidence" value="ECO:0000318"/>
    <property type="project" value="GO_Central"/>
</dbReference>
<dbReference type="GO" id="GO:0003333">
    <property type="term" value="P:amino acid transmembrane transport"/>
    <property type="evidence" value="ECO:0000318"/>
    <property type="project" value="GO_Central"/>
</dbReference>
<dbReference type="FunFam" id="1.20.1740.10:FF:000017">
    <property type="entry name" value="Amino acid permease"/>
    <property type="match status" value="1"/>
</dbReference>
<dbReference type="Gene3D" id="1.20.1740.10">
    <property type="entry name" value="Amino acid/polyamine transporter I"/>
    <property type="match status" value="1"/>
</dbReference>
<dbReference type="InterPro" id="IPR004841">
    <property type="entry name" value="AA-permease/SLC12A_dom"/>
</dbReference>
<dbReference type="InterPro" id="IPR004840">
    <property type="entry name" value="Amino_acid_permease_CS"/>
</dbReference>
<dbReference type="InterPro" id="IPR050524">
    <property type="entry name" value="APC_YAT"/>
</dbReference>
<dbReference type="PANTHER" id="PTHR43341">
    <property type="entry name" value="AMINO ACID PERMEASE"/>
    <property type="match status" value="1"/>
</dbReference>
<dbReference type="PANTHER" id="PTHR43341:SF1">
    <property type="entry name" value="GENERAL AMINO-ACID PERMEASE GAP1"/>
    <property type="match status" value="1"/>
</dbReference>
<dbReference type="Pfam" id="PF00324">
    <property type="entry name" value="AA_permease"/>
    <property type="match status" value="1"/>
</dbReference>
<dbReference type="PIRSF" id="PIRSF006060">
    <property type="entry name" value="AA_transporter"/>
    <property type="match status" value="1"/>
</dbReference>
<dbReference type="PROSITE" id="PS00218">
    <property type="entry name" value="AMINO_ACID_PERMEASE_1"/>
    <property type="match status" value="1"/>
</dbReference>